<accession>A8FAH5</accession>
<protein>
    <recommendedName>
        <fullName evidence="1">GMP synthase [glutamine-hydrolyzing]</fullName>
        <ecNumber evidence="1">6.3.5.2</ecNumber>
    </recommendedName>
    <alternativeName>
        <fullName evidence="1">GMP synthetase</fullName>
    </alternativeName>
    <alternativeName>
        <fullName evidence="1">Glutamine amidotransferase</fullName>
    </alternativeName>
</protein>
<dbReference type="EC" id="6.3.5.2" evidence="1"/>
<dbReference type="EMBL" id="CP000813">
    <property type="protein sequence ID" value="ABV61242.1"/>
    <property type="molecule type" value="Genomic_DNA"/>
</dbReference>
<dbReference type="RefSeq" id="WP_012009093.1">
    <property type="nucleotide sequence ID" value="NZ_VEHA01000009.1"/>
</dbReference>
<dbReference type="SMR" id="A8FAH5"/>
<dbReference type="STRING" id="315750.BPUM_0548"/>
<dbReference type="MEROPS" id="C26.957"/>
<dbReference type="GeneID" id="5619796"/>
<dbReference type="KEGG" id="bpu:BPUM_0548"/>
<dbReference type="eggNOG" id="COG0518">
    <property type="taxonomic scope" value="Bacteria"/>
</dbReference>
<dbReference type="eggNOG" id="COG0519">
    <property type="taxonomic scope" value="Bacteria"/>
</dbReference>
<dbReference type="HOGENOM" id="CLU_014340_0_5_9"/>
<dbReference type="OrthoDB" id="9802219at2"/>
<dbReference type="UniPathway" id="UPA00189">
    <property type="reaction ID" value="UER00296"/>
</dbReference>
<dbReference type="Proteomes" id="UP000001355">
    <property type="component" value="Chromosome"/>
</dbReference>
<dbReference type="GO" id="GO:0005829">
    <property type="term" value="C:cytosol"/>
    <property type="evidence" value="ECO:0007669"/>
    <property type="project" value="TreeGrafter"/>
</dbReference>
<dbReference type="GO" id="GO:0005524">
    <property type="term" value="F:ATP binding"/>
    <property type="evidence" value="ECO:0007669"/>
    <property type="project" value="UniProtKB-UniRule"/>
</dbReference>
<dbReference type="GO" id="GO:0003921">
    <property type="term" value="F:GMP synthase activity"/>
    <property type="evidence" value="ECO:0007669"/>
    <property type="project" value="InterPro"/>
</dbReference>
<dbReference type="CDD" id="cd01742">
    <property type="entry name" value="GATase1_GMP_Synthase"/>
    <property type="match status" value="1"/>
</dbReference>
<dbReference type="CDD" id="cd01997">
    <property type="entry name" value="GMP_synthase_C"/>
    <property type="match status" value="1"/>
</dbReference>
<dbReference type="FunFam" id="3.30.300.10:FF:000002">
    <property type="entry name" value="GMP synthase [glutamine-hydrolyzing]"/>
    <property type="match status" value="1"/>
</dbReference>
<dbReference type="FunFam" id="3.40.50.620:FF:000001">
    <property type="entry name" value="GMP synthase [glutamine-hydrolyzing]"/>
    <property type="match status" value="1"/>
</dbReference>
<dbReference type="FunFam" id="3.40.50.880:FF:000001">
    <property type="entry name" value="GMP synthase [glutamine-hydrolyzing]"/>
    <property type="match status" value="1"/>
</dbReference>
<dbReference type="Gene3D" id="3.30.300.10">
    <property type="match status" value="1"/>
</dbReference>
<dbReference type="Gene3D" id="3.40.50.880">
    <property type="match status" value="1"/>
</dbReference>
<dbReference type="Gene3D" id="3.40.50.620">
    <property type="entry name" value="HUPs"/>
    <property type="match status" value="1"/>
</dbReference>
<dbReference type="HAMAP" id="MF_00344">
    <property type="entry name" value="GMP_synthase"/>
    <property type="match status" value="1"/>
</dbReference>
<dbReference type="InterPro" id="IPR029062">
    <property type="entry name" value="Class_I_gatase-like"/>
</dbReference>
<dbReference type="InterPro" id="IPR017926">
    <property type="entry name" value="GATASE"/>
</dbReference>
<dbReference type="InterPro" id="IPR001674">
    <property type="entry name" value="GMP_synth_C"/>
</dbReference>
<dbReference type="InterPro" id="IPR004739">
    <property type="entry name" value="GMP_synth_GATase"/>
</dbReference>
<dbReference type="InterPro" id="IPR022955">
    <property type="entry name" value="GMP_synthase"/>
</dbReference>
<dbReference type="InterPro" id="IPR025777">
    <property type="entry name" value="GMPS_ATP_PPase_dom"/>
</dbReference>
<dbReference type="InterPro" id="IPR022310">
    <property type="entry name" value="NAD/GMP_synthase"/>
</dbReference>
<dbReference type="InterPro" id="IPR014729">
    <property type="entry name" value="Rossmann-like_a/b/a_fold"/>
</dbReference>
<dbReference type="NCBIfam" id="TIGR00884">
    <property type="entry name" value="guaA_Cterm"/>
    <property type="match status" value="1"/>
</dbReference>
<dbReference type="NCBIfam" id="TIGR00888">
    <property type="entry name" value="guaA_Nterm"/>
    <property type="match status" value="1"/>
</dbReference>
<dbReference type="NCBIfam" id="NF000848">
    <property type="entry name" value="PRK00074.1"/>
    <property type="match status" value="1"/>
</dbReference>
<dbReference type="PANTHER" id="PTHR11922:SF2">
    <property type="entry name" value="GMP SYNTHASE [GLUTAMINE-HYDROLYZING]"/>
    <property type="match status" value="1"/>
</dbReference>
<dbReference type="PANTHER" id="PTHR11922">
    <property type="entry name" value="GMP SYNTHASE-RELATED"/>
    <property type="match status" value="1"/>
</dbReference>
<dbReference type="Pfam" id="PF00117">
    <property type="entry name" value="GATase"/>
    <property type="match status" value="1"/>
</dbReference>
<dbReference type="Pfam" id="PF00958">
    <property type="entry name" value="GMP_synt_C"/>
    <property type="match status" value="1"/>
</dbReference>
<dbReference type="Pfam" id="PF02540">
    <property type="entry name" value="NAD_synthase"/>
    <property type="match status" value="1"/>
</dbReference>
<dbReference type="PRINTS" id="PR00097">
    <property type="entry name" value="ANTSNTHASEII"/>
</dbReference>
<dbReference type="PRINTS" id="PR00099">
    <property type="entry name" value="CPSGATASE"/>
</dbReference>
<dbReference type="PRINTS" id="PR00096">
    <property type="entry name" value="GATASE"/>
</dbReference>
<dbReference type="SUPFAM" id="SSF52402">
    <property type="entry name" value="Adenine nucleotide alpha hydrolases-like"/>
    <property type="match status" value="1"/>
</dbReference>
<dbReference type="SUPFAM" id="SSF52317">
    <property type="entry name" value="Class I glutamine amidotransferase-like"/>
    <property type="match status" value="1"/>
</dbReference>
<dbReference type="SUPFAM" id="SSF54810">
    <property type="entry name" value="GMP synthetase C-terminal dimerisation domain"/>
    <property type="match status" value="1"/>
</dbReference>
<dbReference type="PROSITE" id="PS51273">
    <property type="entry name" value="GATASE_TYPE_1"/>
    <property type="match status" value="1"/>
</dbReference>
<dbReference type="PROSITE" id="PS51553">
    <property type="entry name" value="GMPS_ATP_PPASE"/>
    <property type="match status" value="1"/>
</dbReference>
<evidence type="ECO:0000255" key="1">
    <source>
        <dbReference type="HAMAP-Rule" id="MF_00344"/>
    </source>
</evidence>
<keyword id="KW-0067">ATP-binding</keyword>
<keyword id="KW-0315">Glutamine amidotransferase</keyword>
<keyword id="KW-0332">GMP biosynthesis</keyword>
<keyword id="KW-0436">Ligase</keyword>
<keyword id="KW-0547">Nucleotide-binding</keyword>
<keyword id="KW-0658">Purine biosynthesis</keyword>
<organism>
    <name type="scientific">Bacillus pumilus (strain SAFR-032)</name>
    <dbReference type="NCBI Taxonomy" id="315750"/>
    <lineage>
        <taxon>Bacteria</taxon>
        <taxon>Bacillati</taxon>
        <taxon>Bacillota</taxon>
        <taxon>Bacilli</taxon>
        <taxon>Bacillales</taxon>
        <taxon>Bacillaceae</taxon>
        <taxon>Bacillus</taxon>
    </lineage>
</organism>
<comment type="function">
    <text evidence="1">Catalyzes the synthesis of GMP from XMP.</text>
</comment>
<comment type="catalytic activity">
    <reaction evidence="1">
        <text>XMP + L-glutamine + ATP + H2O = GMP + L-glutamate + AMP + diphosphate + 2 H(+)</text>
        <dbReference type="Rhea" id="RHEA:11680"/>
        <dbReference type="ChEBI" id="CHEBI:15377"/>
        <dbReference type="ChEBI" id="CHEBI:15378"/>
        <dbReference type="ChEBI" id="CHEBI:29985"/>
        <dbReference type="ChEBI" id="CHEBI:30616"/>
        <dbReference type="ChEBI" id="CHEBI:33019"/>
        <dbReference type="ChEBI" id="CHEBI:57464"/>
        <dbReference type="ChEBI" id="CHEBI:58115"/>
        <dbReference type="ChEBI" id="CHEBI:58359"/>
        <dbReference type="ChEBI" id="CHEBI:456215"/>
        <dbReference type="EC" id="6.3.5.2"/>
    </reaction>
</comment>
<comment type="pathway">
    <text evidence="1">Purine metabolism; GMP biosynthesis; GMP from XMP (L-Gln route): step 1/1.</text>
</comment>
<comment type="subunit">
    <text evidence="1">Homodimer.</text>
</comment>
<sequence length="513" mass="57453">MTNLVNEMILVLDFGSQYNQLITRRIREFGVYSELHPHTLTAEEIKEMAPKGIILSGGPNSVYDEGSFRCDEKIFDLDIPVLGICYGMQLMTHYLGGKVEAASQREYGKADIHINGTPALFKDLPTDQVVWMSHGDLVVEVPEGFTVDATSAHCPNSAMSLAEKNFYGVQFHPEVRHSEYGNDLLKNFVFGVCDCDGKWSMENFIEIEMQKIRETVGDKQVLCALSGGVDSSVVAVLIHKAIGDQLTCIFVDHGLLRKGEAEGVMKTFSEGFNMNVIKVDAKDRFLNKLKGVSDPEQKRKIIGNEFIYVFDDESDKLKGIDYLAQGTLYTDIIESGTATAQTIKSHHNVGGLPEDMQFELIEPLNTLFKDEVRALGSELGIPDDIVWRQPFPGPGLGIRVLGEISEEKLEIVRESDAILREEIANFGLERDIWQYFTVLPDIRSVGVMGDARTYDYTIGIRAVTSIDGMTSDWARIPWDVLEKISTRIVNEVKHVNRVVYDITSKPPATIEWE</sequence>
<name>GUAA_BACP2</name>
<proteinExistence type="inferred from homology"/>
<feature type="chain" id="PRO_1000120218" description="GMP synthase [glutamine-hydrolyzing]">
    <location>
        <begin position="1"/>
        <end position="513"/>
    </location>
</feature>
<feature type="domain" description="Glutamine amidotransferase type-1" evidence="1">
    <location>
        <begin position="8"/>
        <end position="198"/>
    </location>
</feature>
<feature type="domain" description="GMPS ATP-PPase" evidence="1">
    <location>
        <begin position="199"/>
        <end position="388"/>
    </location>
</feature>
<feature type="active site" description="Nucleophile" evidence="1">
    <location>
        <position position="85"/>
    </location>
</feature>
<feature type="active site" evidence="1">
    <location>
        <position position="172"/>
    </location>
</feature>
<feature type="active site" evidence="1">
    <location>
        <position position="174"/>
    </location>
</feature>
<feature type="binding site" evidence="1">
    <location>
        <begin position="226"/>
        <end position="232"/>
    </location>
    <ligand>
        <name>ATP</name>
        <dbReference type="ChEBI" id="CHEBI:30616"/>
    </ligand>
</feature>
<gene>
    <name evidence="1" type="primary">guaA</name>
    <name type="ordered locus">BPUM_0548</name>
</gene>
<reference key="1">
    <citation type="journal article" date="2007" name="PLoS ONE">
        <title>Paradoxical DNA repair and peroxide resistance gene conservation in Bacillus pumilus SAFR-032.</title>
        <authorList>
            <person name="Gioia J."/>
            <person name="Yerrapragada S."/>
            <person name="Qin X."/>
            <person name="Jiang H."/>
            <person name="Igboeli O.C."/>
            <person name="Muzny D."/>
            <person name="Dugan-Rocha S."/>
            <person name="Ding Y."/>
            <person name="Hawes A."/>
            <person name="Liu W."/>
            <person name="Perez L."/>
            <person name="Kovar C."/>
            <person name="Dinh H."/>
            <person name="Lee S."/>
            <person name="Nazareth L."/>
            <person name="Blyth P."/>
            <person name="Holder M."/>
            <person name="Buhay C."/>
            <person name="Tirumalai M.R."/>
            <person name="Liu Y."/>
            <person name="Dasgupta I."/>
            <person name="Bokhetache L."/>
            <person name="Fujita M."/>
            <person name="Karouia F."/>
            <person name="Eswara Moorthy P."/>
            <person name="Siefert J."/>
            <person name="Uzman A."/>
            <person name="Buzumbo P."/>
            <person name="Verma A."/>
            <person name="Zwiya H."/>
            <person name="McWilliams B.D."/>
            <person name="Olowu A."/>
            <person name="Clinkenbeard K.D."/>
            <person name="Newcombe D."/>
            <person name="Golebiewski L."/>
            <person name="Petrosino J.F."/>
            <person name="Nicholson W.L."/>
            <person name="Fox G.E."/>
            <person name="Venkateswaran K."/>
            <person name="Highlander S.K."/>
            <person name="Weinstock G.M."/>
        </authorList>
    </citation>
    <scope>NUCLEOTIDE SEQUENCE [LARGE SCALE GENOMIC DNA]</scope>
    <source>
        <strain>SAFR-032</strain>
    </source>
</reference>